<feature type="transit peptide" description="Chloroplast" evidence="2">
    <location>
        <begin position="1"/>
        <end position="38"/>
    </location>
</feature>
<feature type="chain" id="PRO_0000417590" description="4-hydroxy-3-methylbut-2-en-1-yl diphosphate synthase (ferredoxin), chloroplastic">
    <location>
        <begin position="39"/>
        <end position="741"/>
    </location>
</feature>
<feature type="binding site" evidence="1">
    <location>
        <position position="644"/>
    </location>
    <ligand>
        <name>[4Fe-4S] cluster</name>
        <dbReference type="ChEBI" id="CHEBI:49883"/>
    </ligand>
</feature>
<feature type="binding site" evidence="1">
    <location>
        <position position="647"/>
    </location>
    <ligand>
        <name>[4Fe-4S] cluster</name>
        <dbReference type="ChEBI" id="CHEBI:49883"/>
    </ligand>
</feature>
<feature type="binding site" evidence="1">
    <location>
        <position position="678"/>
    </location>
    <ligand>
        <name>[4Fe-4S] cluster</name>
        <dbReference type="ChEBI" id="CHEBI:49883"/>
    </ligand>
</feature>
<feature type="binding site" evidence="1">
    <location>
        <position position="685"/>
    </location>
    <ligand>
        <name>[4Fe-4S] cluster</name>
        <dbReference type="ChEBI" id="CHEBI:49883"/>
    </ligand>
</feature>
<feature type="splice variant" id="VSP_043826" description="In isoform 2." evidence="10">
    <original>VA</original>
    <variation>A</variation>
    <location>
        <begin position="373"/>
        <end position="374"/>
    </location>
</feature>
<feature type="mutagenesis site" description="In clb4-3/csb3; semi-dwarf phenotype, elevated levels of salicylic acid and enhanced resistance to biotrophic pathogens." evidence="7">
    <original>G</original>
    <variation>D</variation>
    <location>
        <position position="696"/>
    </location>
</feature>
<feature type="sequence conflict" description="In Ref. 4; AAM19840." evidence="11" ref="4">
    <original>N</original>
    <variation>D</variation>
    <location>
        <position position="94"/>
    </location>
</feature>
<feature type="sequence conflict" description="In Ref. 4; AAL91150/AAQ65096." evidence="11" ref="4">
    <original>R</original>
    <variation>G</variation>
    <location>
        <position position="104"/>
    </location>
</feature>
<sequence>MATGVLPAPVSGIKIPDSKVGFGKSMNLVRICDVRSLRSARRRVSVIRNSNQGSDLAELQPASEGSPLLVPRQKYCESLHKTVRRKTRTVMVGNVALGSEHPIRIQTMTTSDTKDITGTVDEVMRIADKGADIVRITVQGKKEADACFEIKDKLVQLNYNIPLVADIHFAPTVALRVAECFDKIRVNPGNFADRRAQFETIDYTEDEYQKELQHIEQVFTPLVEKCKKYGRAMRIGTNHGSLSDRIMSYYGDSPRGMVESAFEFARICRKLDYHNFVFSMKASNPVIMVQAYRLLVAEMYVHGWDYPLHLGVTEAGEGEDGRMKSAIGIGTLLQDGLGDTIRVSLTEPPEEEIDPCRRLANLGTKAAKLQQGVAPFEEKHRHYFDFQRRTGDLPVQKEGEEVDYRNVLHRDGSVLMSISLDQLKAPELLYRSLATKLVVGMPFKDLATVDSILLRELPPVDDQVARLALKRLIDVSMGVIAPLSEQLTKPLPNAMVLVNLKELSGGAYKLLPEGTRLVVSLRGDEPYEELEILKNIDATMILHDVPFTEDKVSRVHAARRLFEFLSENSVNFPVIHHINFPTGIHRDELVIHAGTYAGGLLVDGLGDGVMLEAPDQDFDFLRNTSFNLLQGCRMRNTKTEYVSCPSCGRTLFDLQEISAEIREKTSHLPGVSIAIMGCIVNGPGEMADADFGYVGGSPGKIDLYVGKTVVKRGIAMTEATDALIGLIKEHGRWVDPPVADE</sequence>
<dbReference type="EC" id="1.17.7.1" evidence="5"/>
<dbReference type="EMBL" id="AF434673">
    <property type="protein sequence ID" value="AAO15446.1"/>
    <property type="molecule type" value="mRNA"/>
</dbReference>
<dbReference type="EMBL" id="AB005246">
    <property type="protein sequence ID" value="BAB09833.1"/>
    <property type="status" value="ALT_INIT"/>
    <property type="molecule type" value="Genomic_DNA"/>
</dbReference>
<dbReference type="EMBL" id="CP002688">
    <property type="protein sequence ID" value="AED97353.1"/>
    <property type="molecule type" value="Genomic_DNA"/>
</dbReference>
<dbReference type="EMBL" id="CP002688">
    <property type="protein sequence ID" value="AED97354.1"/>
    <property type="molecule type" value="Genomic_DNA"/>
</dbReference>
<dbReference type="EMBL" id="AY081261">
    <property type="protein sequence ID" value="AAL91150.1"/>
    <property type="molecule type" value="mRNA"/>
</dbReference>
<dbReference type="EMBL" id="AY094472">
    <property type="protein sequence ID" value="AAM19840.1"/>
    <property type="molecule type" value="mRNA"/>
</dbReference>
<dbReference type="EMBL" id="BT010473">
    <property type="protein sequence ID" value="AAQ65096.1"/>
    <property type="molecule type" value="mRNA"/>
</dbReference>
<dbReference type="RefSeq" id="NP_200868.2">
    <molecule id="F4K0E8-2"/>
    <property type="nucleotide sequence ID" value="NM_125453.6"/>
</dbReference>
<dbReference type="RefSeq" id="NP_851233.1">
    <molecule id="F4K0E8-1"/>
    <property type="nucleotide sequence ID" value="NM_180902.5"/>
</dbReference>
<dbReference type="BioGRID" id="21425">
    <property type="interactions" value="2"/>
</dbReference>
<dbReference type="FunCoup" id="F4K0E8">
    <property type="interactions" value="1256"/>
</dbReference>
<dbReference type="STRING" id="3702.F4K0E8"/>
<dbReference type="iPTMnet" id="F4K0E8"/>
<dbReference type="MetOSite" id="F4K0E8"/>
<dbReference type="PaxDb" id="3702-AT5G60600.1"/>
<dbReference type="ProteomicsDB" id="250684">
    <molecule id="F4K0E8-1"/>
</dbReference>
<dbReference type="EnsemblPlants" id="AT5G60600.1">
    <molecule id="F4K0E8-1"/>
    <property type="protein sequence ID" value="AT5G60600.1"/>
    <property type="gene ID" value="AT5G60600"/>
</dbReference>
<dbReference type="EnsemblPlants" id="AT5G60600.2">
    <molecule id="F4K0E8-2"/>
    <property type="protein sequence ID" value="AT5G60600.2"/>
    <property type="gene ID" value="AT5G60600"/>
</dbReference>
<dbReference type="GeneID" id="836181"/>
<dbReference type="Gramene" id="AT5G60600.1">
    <molecule id="F4K0E8-1"/>
    <property type="protein sequence ID" value="AT5G60600.1"/>
    <property type="gene ID" value="AT5G60600"/>
</dbReference>
<dbReference type="Gramene" id="AT5G60600.2">
    <molecule id="F4K0E8-2"/>
    <property type="protein sequence ID" value="AT5G60600.2"/>
    <property type="gene ID" value="AT5G60600"/>
</dbReference>
<dbReference type="KEGG" id="ath:AT5G60600"/>
<dbReference type="Araport" id="AT5G60600"/>
<dbReference type="TAIR" id="AT5G60600">
    <property type="gene designation" value="HDS"/>
</dbReference>
<dbReference type="eggNOG" id="ENOG502QSBY">
    <property type="taxonomic scope" value="Eukaryota"/>
</dbReference>
<dbReference type="HOGENOM" id="CLU_012689_0_0_1"/>
<dbReference type="InParanoid" id="F4K0E8"/>
<dbReference type="OMA" id="LYVGKEC"/>
<dbReference type="BioCyc" id="MetaCyc:AT5G60600-MONOMER"/>
<dbReference type="BRENDA" id="1.17.7.1">
    <property type="organism ID" value="399"/>
</dbReference>
<dbReference type="UniPathway" id="UPA00056">
    <property type="reaction ID" value="UER00096"/>
</dbReference>
<dbReference type="PRO" id="PR:F4K0E8"/>
<dbReference type="Proteomes" id="UP000006548">
    <property type="component" value="Chromosome 5"/>
</dbReference>
<dbReference type="ExpressionAtlas" id="F4K0E8">
    <property type="expression patterns" value="baseline and differential"/>
</dbReference>
<dbReference type="GO" id="GO:0009507">
    <property type="term" value="C:chloroplast"/>
    <property type="evidence" value="ECO:0000314"/>
    <property type="project" value="TAIR"/>
</dbReference>
<dbReference type="GO" id="GO:0009941">
    <property type="term" value="C:chloroplast envelope"/>
    <property type="evidence" value="ECO:0007005"/>
    <property type="project" value="TAIR"/>
</dbReference>
<dbReference type="GO" id="GO:0009570">
    <property type="term" value="C:chloroplast stroma"/>
    <property type="evidence" value="ECO:0007005"/>
    <property type="project" value="TAIR"/>
</dbReference>
<dbReference type="GO" id="GO:0009536">
    <property type="term" value="C:plastid"/>
    <property type="evidence" value="ECO:0007005"/>
    <property type="project" value="TAIR"/>
</dbReference>
<dbReference type="GO" id="GO:0051539">
    <property type="term" value="F:4 iron, 4 sulfur cluster binding"/>
    <property type="evidence" value="ECO:0000314"/>
    <property type="project" value="TAIR"/>
</dbReference>
<dbReference type="GO" id="GO:0046429">
    <property type="term" value="F:4-hydroxy-3-methylbut-2-en-1-yl diphosphate synthase activity (ferredoxin)"/>
    <property type="evidence" value="ECO:0000314"/>
    <property type="project" value="TAIR"/>
</dbReference>
<dbReference type="GO" id="GO:0005506">
    <property type="term" value="F:iron ion binding"/>
    <property type="evidence" value="ECO:0007669"/>
    <property type="project" value="InterPro"/>
</dbReference>
<dbReference type="GO" id="GO:0019288">
    <property type="term" value="P:isopentenyl diphosphate biosynthetic process, methylerythritol 4-phosphate pathway"/>
    <property type="evidence" value="ECO:0000304"/>
    <property type="project" value="TAIR"/>
</dbReference>
<dbReference type="GO" id="GO:0009617">
    <property type="term" value="P:response to bacterium"/>
    <property type="evidence" value="ECO:0000315"/>
    <property type="project" value="TAIR"/>
</dbReference>
<dbReference type="GO" id="GO:0009862">
    <property type="term" value="P:systemic acquired resistance, salicylic acid mediated signaling pathway"/>
    <property type="evidence" value="ECO:0000315"/>
    <property type="project" value="TAIR"/>
</dbReference>
<dbReference type="GO" id="GO:0016114">
    <property type="term" value="P:terpenoid biosynthetic process"/>
    <property type="evidence" value="ECO:0007669"/>
    <property type="project" value="InterPro"/>
</dbReference>
<dbReference type="FunFam" id="3.20.20.20:FF:000005">
    <property type="entry name" value="4-hydroxy-3-methylbut-2-en-1-yl diphosphate synthase (flavodoxin)"/>
    <property type="match status" value="1"/>
</dbReference>
<dbReference type="FunFam" id="3.30.413.10:FF:000006">
    <property type="entry name" value="4-hydroxy-3-methylbut-2-en-1-yl diphosphate synthase (flavodoxin)"/>
    <property type="match status" value="1"/>
</dbReference>
<dbReference type="Gene3D" id="3.20.20.20">
    <property type="entry name" value="Dihydropteroate synthase-like"/>
    <property type="match status" value="1"/>
</dbReference>
<dbReference type="Gene3D" id="3.30.413.10">
    <property type="entry name" value="Sulfite Reductase Hemoprotein, domain 1"/>
    <property type="match status" value="1"/>
</dbReference>
<dbReference type="HAMAP" id="MF_00159">
    <property type="entry name" value="IspG"/>
    <property type="match status" value="1"/>
</dbReference>
<dbReference type="InterPro" id="IPR011005">
    <property type="entry name" value="Dihydropteroate_synth-like_sf"/>
</dbReference>
<dbReference type="InterPro" id="IPR017178">
    <property type="entry name" value="IspG_atypical"/>
</dbReference>
<dbReference type="InterPro" id="IPR004588">
    <property type="entry name" value="IspG_bac-typ"/>
</dbReference>
<dbReference type="InterPro" id="IPR045854">
    <property type="entry name" value="NO2/SO3_Rdtase_4Fe4S_sf"/>
</dbReference>
<dbReference type="NCBIfam" id="TIGR00612">
    <property type="entry name" value="ispG_gcpE"/>
    <property type="match status" value="1"/>
</dbReference>
<dbReference type="PANTHER" id="PTHR30454">
    <property type="entry name" value="4-HYDROXY-3-METHYLBUT-2-EN-1-YL DIPHOSPHATE SYNTHASE"/>
    <property type="match status" value="1"/>
</dbReference>
<dbReference type="PANTHER" id="PTHR30454:SF0">
    <property type="entry name" value="4-HYDROXY-3-METHYLBUT-2-EN-1-YL DIPHOSPHATE SYNTHASE (FERREDOXIN), CHLOROPLASTIC"/>
    <property type="match status" value="1"/>
</dbReference>
<dbReference type="Pfam" id="PF04551">
    <property type="entry name" value="GcpE"/>
    <property type="match status" value="1"/>
</dbReference>
<dbReference type="PIRSF" id="PIRSF037336">
    <property type="entry name" value="IspG_like"/>
    <property type="match status" value="1"/>
</dbReference>
<dbReference type="SUPFAM" id="SSF56014">
    <property type="entry name" value="Nitrite and sulphite reductase 4Fe-4S domain-like"/>
    <property type="match status" value="1"/>
</dbReference>
<comment type="function">
    <text evidence="3 4 5 7 8">Enzyme of the plastid non-mevalonate pathway for isoprenoid biosynthesis that converts 2-C-methyl-D-erythritol 2,4-cyclodiphosphate (ME-2,4cPP) into 1-hydroxy-2-methyl-2-(E)-butenyl 4-diphosphate. Is essential for chloroplast development and required for the salicylic acid (SA)-mediated disease resistance to biotrophic pathogens.</text>
</comment>
<comment type="catalytic activity">
    <reaction evidence="5">
        <text>(2E)-4-hydroxy-3-methylbut-2-enyl diphosphate + 2 oxidized [2Fe-2S]-[ferredoxin] + H2O = 2-C-methyl-D-erythritol 2,4-cyclic diphosphate + 2 reduced [2Fe-2S]-[ferredoxin] + H(+)</text>
        <dbReference type="Rhea" id="RHEA:26119"/>
        <dbReference type="Rhea" id="RHEA-COMP:10000"/>
        <dbReference type="Rhea" id="RHEA-COMP:10001"/>
        <dbReference type="ChEBI" id="CHEBI:15377"/>
        <dbReference type="ChEBI" id="CHEBI:15378"/>
        <dbReference type="ChEBI" id="CHEBI:33737"/>
        <dbReference type="ChEBI" id="CHEBI:33738"/>
        <dbReference type="ChEBI" id="CHEBI:58483"/>
        <dbReference type="ChEBI" id="CHEBI:128753"/>
        <dbReference type="EC" id="1.17.7.1"/>
    </reaction>
</comment>
<comment type="cofactor">
    <cofactor evidence="5">
        <name>[4Fe-4S] cluster</name>
        <dbReference type="ChEBI" id="CHEBI:49883"/>
    </cofactor>
    <text evidence="5">Binds 1 [4Fe-4S] cluster per subunit.</text>
</comment>
<comment type="pathway">
    <text>Isoprenoid biosynthesis; isopentenyl diphosphate biosynthesis via DXP pathway; isopentenyl diphosphate from 1-deoxy-D-xylulose 5-phosphate: step 5/6.</text>
</comment>
<comment type="subunit">
    <text evidence="1">Homodimer.</text>
</comment>
<comment type="subcellular location">
    <subcellularLocation>
        <location evidence="12 13">Plastid</location>
        <location evidence="12 13">Chloroplast stroma</location>
    </subcellularLocation>
</comment>
<comment type="alternative products">
    <event type="alternative splicing"/>
    <isoform>
        <id>F4K0E8-1</id>
        <name>1</name>
        <sequence type="displayed"/>
    </isoform>
    <isoform>
        <id>F4K0E8-2</id>
        <name>2</name>
        <sequence type="described" ref="VSP_043826"/>
    </isoform>
</comment>
<comment type="tissue specificity">
    <text evidence="4">Expressed in roots, shoots, leaves, flowers and siliques (at protein level).</text>
</comment>
<comment type="induction">
    <text evidence="6">Circadian-regulated with a peak in the late period of dark phase and early period of the light phase.</text>
</comment>
<comment type="disruption phenotype">
    <text evidence="4 9">Albino phenotype and seedling lethal when homozygous. The phenotype is caused by an early arrest in chloroplast differentiation.</text>
</comment>
<comment type="miscellaneous">
    <molecule>Isoform 2</molecule>
    <text evidence="11">May be due to a competing donor splice site.</text>
</comment>
<comment type="similarity">
    <text evidence="11">Belongs to the IspG family.</text>
</comment>
<comment type="sequence caution" evidence="11">
    <conflict type="erroneous initiation">
        <sequence resource="EMBL-CDS" id="BAB09833"/>
    </conflict>
    <text>Truncated N-terminus.</text>
</comment>
<proteinExistence type="evidence at protein level"/>
<name>ISPG_ARATH</name>
<protein>
    <recommendedName>
        <fullName>4-hydroxy-3-methylbut-2-en-1-yl diphosphate synthase (ferredoxin), chloroplastic</fullName>
        <ecNumber evidence="5">1.17.7.1</ecNumber>
    </recommendedName>
    <alternativeName>
        <fullName>1-hydroxy-2-methyl-2-(E)-butenyl 4-diphosphate synthase</fullName>
    </alternativeName>
    <alternativeName>
        <fullName>Protein CHLOROPLAST BIOGENESIS 4</fullName>
    </alternativeName>
    <alternativeName>
        <fullName>Protein CONSTITUTIVE SUBTILISIN 3</fullName>
    </alternativeName>
</protein>
<gene>
    <name type="primary">ISPG</name>
    <name type="synonym">CLB4</name>
    <name type="synonym">CSB3</name>
    <name type="synonym">HDS</name>
    <name type="ordered locus">At5g60600</name>
    <name type="ORF">MUP24.2</name>
</gene>
<evidence type="ECO:0000250" key="1"/>
<evidence type="ECO:0000255" key="2"/>
<evidence type="ECO:0000269" key="3">
    <source>
    </source>
</evidence>
<evidence type="ECO:0000269" key="4">
    <source>
    </source>
</evidence>
<evidence type="ECO:0000269" key="5">
    <source>
    </source>
</evidence>
<evidence type="ECO:0000269" key="6">
    <source>
    </source>
</evidence>
<evidence type="ECO:0000269" key="7">
    <source>
    </source>
</evidence>
<evidence type="ECO:0000269" key="8">
    <source>
    </source>
</evidence>
<evidence type="ECO:0000269" key="9">
    <source>
    </source>
</evidence>
<evidence type="ECO:0000303" key="10">
    <source>
    </source>
</evidence>
<evidence type="ECO:0000305" key="11"/>
<evidence type="ECO:0000305" key="12">
    <source>
    </source>
</evidence>
<evidence type="ECO:0000305" key="13">
    <source>
    </source>
</evidence>
<keyword id="KW-0004">4Fe-4S</keyword>
<keyword id="KW-0025">Alternative splicing</keyword>
<keyword id="KW-0150">Chloroplast</keyword>
<keyword id="KW-0408">Iron</keyword>
<keyword id="KW-0411">Iron-sulfur</keyword>
<keyword id="KW-0414">Isoprene biosynthesis</keyword>
<keyword id="KW-0479">Metal-binding</keyword>
<keyword id="KW-0560">Oxidoreductase</keyword>
<keyword id="KW-0934">Plastid</keyword>
<keyword id="KW-1185">Reference proteome</keyword>
<keyword id="KW-0809">Transit peptide</keyword>
<accession>F4K0E8</accession>
<accession>Q8GZR7</accession>
<accession>Q8LPQ4</accession>
<accession>Q8RXG8</accession>
<accession>Q9FF59</accession>
<organism>
    <name type="scientific">Arabidopsis thaliana</name>
    <name type="common">Mouse-ear cress</name>
    <dbReference type="NCBI Taxonomy" id="3702"/>
    <lineage>
        <taxon>Eukaryota</taxon>
        <taxon>Viridiplantae</taxon>
        <taxon>Streptophyta</taxon>
        <taxon>Embryophyta</taxon>
        <taxon>Tracheophyta</taxon>
        <taxon>Spermatophyta</taxon>
        <taxon>Magnoliopsida</taxon>
        <taxon>eudicotyledons</taxon>
        <taxon>Gunneridae</taxon>
        <taxon>Pentapetalae</taxon>
        <taxon>rosids</taxon>
        <taxon>malvids</taxon>
        <taxon>Brassicales</taxon>
        <taxon>Brassicaceae</taxon>
        <taxon>Camelineae</taxon>
        <taxon>Arabidopsis</taxon>
    </lineage>
</organism>
<reference key="1">
    <citation type="journal article" date="2002" name="FEBS Lett.">
        <title>Functional analysis of the Arabidopsis thaliana GCPE protein involved in plastid isoprenoid biosynthesis.</title>
        <authorList>
            <person name="Querol J."/>
            <person name="Campos N."/>
            <person name="Imperial S."/>
            <person name="Boronat A."/>
            <person name="Rodriguez-Concepcion M."/>
        </authorList>
    </citation>
    <scope>NUCLEOTIDE SEQUENCE [MRNA] (ISOFORM 2)</scope>
    <scope>FUNCTION</scope>
    <scope>SUBCELLULAR LOCATION</scope>
</reference>
<reference key="2">
    <citation type="journal article" date="1997" name="DNA Res.">
        <title>Structural analysis of Arabidopsis thaliana chromosome 5. I. Sequence features of the 1.6 Mb regions covered by twenty physically assigned P1 clones.</title>
        <authorList>
            <person name="Sato S."/>
            <person name="Kotani H."/>
            <person name="Nakamura Y."/>
            <person name="Kaneko T."/>
            <person name="Asamizu E."/>
            <person name="Fukami M."/>
            <person name="Miyajima N."/>
            <person name="Tabata S."/>
        </authorList>
    </citation>
    <scope>NUCLEOTIDE SEQUENCE [LARGE SCALE GENOMIC DNA]</scope>
    <source>
        <strain>cv. Columbia</strain>
    </source>
</reference>
<reference key="3">
    <citation type="journal article" date="2017" name="Plant J.">
        <title>Araport11: a complete reannotation of the Arabidopsis thaliana reference genome.</title>
        <authorList>
            <person name="Cheng C.Y."/>
            <person name="Krishnakumar V."/>
            <person name="Chan A.P."/>
            <person name="Thibaud-Nissen F."/>
            <person name="Schobel S."/>
            <person name="Town C.D."/>
        </authorList>
    </citation>
    <scope>GENOME REANNOTATION</scope>
    <source>
        <strain>cv. Columbia</strain>
    </source>
</reference>
<reference key="4">
    <citation type="journal article" date="2003" name="Science">
        <title>Empirical analysis of transcriptional activity in the Arabidopsis genome.</title>
        <authorList>
            <person name="Yamada K."/>
            <person name="Lim J."/>
            <person name="Dale J.M."/>
            <person name="Chen H."/>
            <person name="Shinn P."/>
            <person name="Palm C.J."/>
            <person name="Southwick A.M."/>
            <person name="Wu H.C."/>
            <person name="Kim C.J."/>
            <person name="Nguyen M."/>
            <person name="Pham P.K."/>
            <person name="Cheuk R.F."/>
            <person name="Karlin-Newmann G."/>
            <person name="Liu S.X."/>
            <person name="Lam B."/>
            <person name="Sakano H."/>
            <person name="Wu T."/>
            <person name="Yu G."/>
            <person name="Miranda M."/>
            <person name="Quach H.L."/>
            <person name="Tripp M."/>
            <person name="Chang C.H."/>
            <person name="Lee J.M."/>
            <person name="Toriumi M.J."/>
            <person name="Chan M.M."/>
            <person name="Tang C.C."/>
            <person name="Onodera C.S."/>
            <person name="Deng J.M."/>
            <person name="Akiyama K."/>
            <person name="Ansari Y."/>
            <person name="Arakawa T."/>
            <person name="Banh J."/>
            <person name="Banno F."/>
            <person name="Bowser L."/>
            <person name="Brooks S.Y."/>
            <person name="Carninci P."/>
            <person name="Chao Q."/>
            <person name="Choy N."/>
            <person name="Enju A."/>
            <person name="Goldsmith A.D."/>
            <person name="Gurjal M."/>
            <person name="Hansen N.F."/>
            <person name="Hayashizaki Y."/>
            <person name="Johnson-Hopson C."/>
            <person name="Hsuan V.W."/>
            <person name="Iida K."/>
            <person name="Karnes M."/>
            <person name="Khan S."/>
            <person name="Koesema E."/>
            <person name="Ishida J."/>
            <person name="Jiang P.X."/>
            <person name="Jones T."/>
            <person name="Kawai J."/>
            <person name="Kamiya A."/>
            <person name="Meyers C."/>
            <person name="Nakajima M."/>
            <person name="Narusaka M."/>
            <person name="Seki M."/>
            <person name="Sakurai T."/>
            <person name="Satou M."/>
            <person name="Tamse R."/>
            <person name="Vaysberg M."/>
            <person name="Wallender E.K."/>
            <person name="Wong C."/>
            <person name="Yamamura Y."/>
            <person name="Yuan S."/>
            <person name="Shinozaki K."/>
            <person name="Davis R.W."/>
            <person name="Theologis A."/>
            <person name="Ecker J.R."/>
        </authorList>
    </citation>
    <scope>NUCLEOTIDE SEQUENCE [LARGE SCALE MRNA] (ISOFORM 1)</scope>
    <source>
        <strain>cv. Columbia</strain>
    </source>
</reference>
<reference key="5">
    <citation type="journal article" date="2004" name="Plant Physiol.">
        <title>CHLOROPLAST BIOGENESIS genes act cell and noncell autonomously in early chloroplast development.</title>
        <authorList>
            <person name="de la Luz Gutierrez-Nava M."/>
            <person name="Gillmor C.S."/>
            <person name="Jimenez L.F."/>
            <person name="Guevara-Garcia A."/>
            <person name="Leon P."/>
        </authorList>
    </citation>
    <scope>FUNCTION</scope>
    <scope>TISSUE SPECIFICITY</scope>
    <scope>DISRUPTION PHENOTYPE</scope>
    <source>
        <strain>cv. Landsberg erecta</strain>
    </source>
</reference>
<reference key="6">
    <citation type="journal article" date="2005" name="J. Biol. Inorg. Chem.">
        <title>Isoprenoid biosynthesis in chloroplasts via the methylerythritol phosphate pathway: the (E)-4-hydroxy-3-methylbut-2-enyl diphosphate synthase (GcpE) from Arabidopsis thaliana is a [4Fe-4S] protein.</title>
        <authorList>
            <person name="Seemann M."/>
            <person name="Wegner P."/>
            <person name="Schuenemann V."/>
            <person name="Bui B.T."/>
            <person name="Wolff M."/>
            <person name="Marquet A."/>
            <person name="Trautwein A.X."/>
            <person name="Rohmer M."/>
        </authorList>
    </citation>
    <scope>FUNCTION</scope>
    <scope>CATALYTIC ACTIVITY</scope>
    <scope>COFACTOR</scope>
</reference>
<reference key="7">
    <citation type="journal article" date="2005" name="Plant J.">
        <title>The Arabidopsis csb3 mutant reveals a regulatory link between salicylic acid-mediated disease resistance and the methyl-erythritol 4-phosphate pathway.</title>
        <authorList>
            <person name="Gil M.J."/>
            <person name="Coego A."/>
            <person name="Mauch-Mani B."/>
            <person name="Jorda L."/>
            <person name="Vera P."/>
        </authorList>
    </citation>
    <scope>FUNCTION</scope>
    <scope>MUTAGENESIS OF GLY-696</scope>
</reference>
<reference key="8">
    <citation type="journal article" date="2005" name="Plant Physiol.">
        <title>The Arabidopsis IspH homolog is involved in the plastid nonmevalonate pathway of isoprenoid biosynthesis.</title>
        <authorList>
            <person name="Hsieh M.H."/>
            <person name="Goodman H.M."/>
        </authorList>
    </citation>
    <scope>INDUCTION</scope>
</reference>
<reference key="9">
    <citation type="journal article" date="2006" name="FEBS Lett.">
        <title>Isoprenoid biosynthesis in plant chloroplasts via the MEP pathway: direct thylakoid/ferredoxin-dependent photoreduction of GcpE/IspG.</title>
        <authorList>
            <person name="Seemann M."/>
            <person name="Tse Sum Bui B."/>
            <person name="Wolff M."/>
            <person name="Miginiac-Maslow M."/>
            <person name="Rohmer M."/>
        </authorList>
    </citation>
    <scope>FUNCTION</scope>
</reference>
<reference key="10">
    <citation type="journal article" date="2008" name="Plant Mol. Biol.">
        <title>Chloroplast localization of methylerythritol 4-phosphate pathway enzymes and regulation of mitochondrial genes in ispD and ispE albino mutants in Arabidopsis.</title>
        <authorList>
            <person name="Hsieh M.H."/>
            <person name="Chang C.Y."/>
            <person name="Hsu S.J."/>
            <person name="Chen J.J."/>
        </authorList>
    </citation>
    <scope>SUBCELLULAR LOCATION</scope>
</reference>
<reference key="11">
    <citation type="journal article" date="2008" name="Trends Plant Sci.">
        <title>The plastidial MEP pathway: unified nomenclature and resources.</title>
        <authorList>
            <person name="Phillips M.A."/>
            <person name="Leon P."/>
            <person name="Boronat A."/>
            <person name="Rodriguez-Concepcion M."/>
        </authorList>
    </citation>
    <scope>DISRUPTION PHENOTYPE</scope>
</reference>